<comment type="subcellular location">
    <subcellularLocation>
        <location evidence="1">Cell inner membrane</location>
        <topology evidence="1">Multi-pass membrane protein</topology>
    </subcellularLocation>
</comment>
<comment type="similarity">
    <text evidence="1">Belongs to the UPF0283 family.</text>
</comment>
<evidence type="ECO:0000255" key="1">
    <source>
        <dbReference type="HAMAP-Rule" id="MF_01085"/>
    </source>
</evidence>
<keyword id="KW-0997">Cell inner membrane</keyword>
<keyword id="KW-1003">Cell membrane</keyword>
<keyword id="KW-0472">Membrane</keyword>
<keyword id="KW-0812">Transmembrane</keyword>
<keyword id="KW-1133">Transmembrane helix</keyword>
<feature type="chain" id="PRO_1000213527" description="UPF0283 membrane protein YcjF">
    <location>
        <begin position="1"/>
        <end position="353"/>
    </location>
</feature>
<feature type="transmembrane region" description="Helical" evidence="1">
    <location>
        <begin position="70"/>
        <end position="90"/>
    </location>
</feature>
<feature type="transmembrane region" description="Helical" evidence="1">
    <location>
        <begin position="100"/>
        <end position="120"/>
    </location>
</feature>
<feature type="transmembrane region" description="Helical" evidence="1">
    <location>
        <begin position="213"/>
        <end position="233"/>
    </location>
</feature>
<dbReference type="EMBL" id="CP001396">
    <property type="protein sequence ID" value="ACR62216.1"/>
    <property type="molecule type" value="Genomic_DNA"/>
</dbReference>
<dbReference type="RefSeq" id="WP_000138728.1">
    <property type="nucleotide sequence ID" value="NC_012759.1"/>
</dbReference>
<dbReference type="SMR" id="C4ZV70"/>
<dbReference type="KEGG" id="ebw:BWG_1153"/>
<dbReference type="HOGENOM" id="CLU_057693_2_0_6"/>
<dbReference type="GO" id="GO:0005886">
    <property type="term" value="C:plasma membrane"/>
    <property type="evidence" value="ECO:0007669"/>
    <property type="project" value="UniProtKB-SubCell"/>
</dbReference>
<dbReference type="HAMAP" id="MF_01085">
    <property type="entry name" value="UPF0283"/>
    <property type="match status" value="1"/>
</dbReference>
<dbReference type="InterPro" id="IPR021147">
    <property type="entry name" value="DUF697"/>
</dbReference>
<dbReference type="InterPro" id="IPR006507">
    <property type="entry name" value="UPF0283"/>
</dbReference>
<dbReference type="NCBIfam" id="TIGR01620">
    <property type="entry name" value="hyp_HI0043"/>
    <property type="match status" value="1"/>
</dbReference>
<dbReference type="PANTHER" id="PTHR39342">
    <property type="entry name" value="UPF0283 MEMBRANE PROTEIN YCJF"/>
    <property type="match status" value="1"/>
</dbReference>
<dbReference type="PANTHER" id="PTHR39342:SF1">
    <property type="entry name" value="UPF0283 MEMBRANE PROTEIN YCJF"/>
    <property type="match status" value="1"/>
</dbReference>
<dbReference type="Pfam" id="PF05128">
    <property type="entry name" value="DUF697"/>
    <property type="match status" value="1"/>
</dbReference>
<sequence length="353" mass="39392">MTEPLKPRIDFDGPLEVDQNPKFRAQQTFDENQAQNFAPATLDEAQEEEGQVEAVMDAALRPKRSLWRKMVMGGLALFGASVVGQGVQWTMNAWQTQDWVALGGCAAGALIIGAGVGSVVTEWRRLWRLRQRAHERDEARDLLHSHGTGKGRAFCEKLAQQAGIDQSHPALQRWYASIHETQNDREVVSLYAHLVQPVLDAQARREISRSAAESTLMIAVSPLALVDMAFIAWRNLRLINRIATLYGIELGYYSRLRLFKLVLLNIAFAGASELVREVGMDWMSQDLAARLSTRAAQGIGAGLLTARLGIKAMELCRPLPWIDDDKPRLGDFRRQLIGQVKETLQKGKTPSEK</sequence>
<name>YCJF_ECOBW</name>
<organism>
    <name type="scientific">Escherichia coli (strain K12 / MC4100 / BW2952)</name>
    <dbReference type="NCBI Taxonomy" id="595496"/>
    <lineage>
        <taxon>Bacteria</taxon>
        <taxon>Pseudomonadati</taxon>
        <taxon>Pseudomonadota</taxon>
        <taxon>Gammaproteobacteria</taxon>
        <taxon>Enterobacterales</taxon>
        <taxon>Enterobacteriaceae</taxon>
        <taxon>Escherichia</taxon>
    </lineage>
</organism>
<reference key="1">
    <citation type="journal article" date="2009" name="J. Bacteriol.">
        <title>Genomic sequencing reveals regulatory mutations and recombinational events in the widely used MC4100 lineage of Escherichia coli K-12.</title>
        <authorList>
            <person name="Ferenci T."/>
            <person name="Zhou Z."/>
            <person name="Betteridge T."/>
            <person name="Ren Y."/>
            <person name="Liu Y."/>
            <person name="Feng L."/>
            <person name="Reeves P.R."/>
            <person name="Wang L."/>
        </authorList>
    </citation>
    <scope>NUCLEOTIDE SEQUENCE [LARGE SCALE GENOMIC DNA]</scope>
    <source>
        <strain>K12 / MC4100 / BW2952</strain>
    </source>
</reference>
<protein>
    <recommendedName>
        <fullName evidence="1">UPF0283 membrane protein YcjF</fullName>
    </recommendedName>
</protein>
<proteinExistence type="inferred from homology"/>
<accession>C4ZV70</accession>
<gene>
    <name evidence="1" type="primary">ycjF</name>
    <name type="ordered locus">BWG_1153</name>
</gene>